<keyword id="KW-0963">Cytoplasm</keyword>
<keyword id="KW-0704">Schiff base</keyword>
<keyword id="KW-0784">Thiamine biosynthesis</keyword>
<keyword id="KW-0808">Transferase</keyword>
<gene>
    <name evidence="1" type="primary">thiG</name>
    <name type="ordered locus">NMA0361</name>
</gene>
<protein>
    <recommendedName>
        <fullName evidence="1">Thiazole synthase</fullName>
        <ecNumber evidence="1">2.8.1.10</ecNumber>
    </recommendedName>
</protein>
<sequence>MLTLYSETFPSRLLLGTAAYPTPEILKQSVRTARPAMITVSLRRAGCGGEAHGQGFWSLLQETGVPVLPNTAGCQSVQEAVTTAQMAREVFETDWIKLELIGDDDTLQPDVFQLVEAAEILIKDGFKVLPYCTEDLIACRRLLDAGCQALMPWAAPIGTGLGAVHAYALNVLRERLPDTPLIIDAGLGLPSQAAQVMEWGFDGVLLNTAVSRSGDPVNMARAFALAVESGRLAFEAGPVEARDKAQASTPTVGQPFWHSAEY</sequence>
<feature type="chain" id="PRO_0000162834" description="Thiazole synthase">
    <location>
        <begin position="1"/>
        <end position="262"/>
    </location>
</feature>
<feature type="region of interest" description="Disordered" evidence="2">
    <location>
        <begin position="243"/>
        <end position="262"/>
    </location>
</feature>
<feature type="active site" description="Schiff-base intermediate with DXP" evidence="1">
    <location>
        <position position="97"/>
    </location>
</feature>
<feature type="binding site" evidence="1">
    <location>
        <position position="158"/>
    </location>
    <ligand>
        <name>1-deoxy-D-xylulose 5-phosphate</name>
        <dbReference type="ChEBI" id="CHEBI:57792"/>
    </ligand>
</feature>
<feature type="binding site" evidence="1">
    <location>
        <begin position="185"/>
        <end position="186"/>
    </location>
    <ligand>
        <name>1-deoxy-D-xylulose 5-phosphate</name>
        <dbReference type="ChEBI" id="CHEBI:57792"/>
    </ligand>
</feature>
<feature type="binding site" evidence="1">
    <location>
        <begin position="207"/>
        <end position="208"/>
    </location>
    <ligand>
        <name>1-deoxy-D-xylulose 5-phosphate</name>
        <dbReference type="ChEBI" id="CHEBI:57792"/>
    </ligand>
</feature>
<organism>
    <name type="scientific">Neisseria meningitidis serogroup A / serotype 4A (strain DSM 15465 / Z2491)</name>
    <dbReference type="NCBI Taxonomy" id="122587"/>
    <lineage>
        <taxon>Bacteria</taxon>
        <taxon>Pseudomonadati</taxon>
        <taxon>Pseudomonadota</taxon>
        <taxon>Betaproteobacteria</taxon>
        <taxon>Neisseriales</taxon>
        <taxon>Neisseriaceae</taxon>
        <taxon>Neisseria</taxon>
    </lineage>
</organism>
<proteinExistence type="inferred from homology"/>
<evidence type="ECO:0000255" key="1">
    <source>
        <dbReference type="HAMAP-Rule" id="MF_00443"/>
    </source>
</evidence>
<evidence type="ECO:0000256" key="2">
    <source>
        <dbReference type="SAM" id="MobiDB-lite"/>
    </source>
</evidence>
<reference key="1">
    <citation type="journal article" date="2000" name="Nature">
        <title>Complete DNA sequence of a serogroup A strain of Neisseria meningitidis Z2491.</title>
        <authorList>
            <person name="Parkhill J."/>
            <person name="Achtman M."/>
            <person name="James K.D."/>
            <person name="Bentley S.D."/>
            <person name="Churcher C.M."/>
            <person name="Klee S.R."/>
            <person name="Morelli G."/>
            <person name="Basham D."/>
            <person name="Brown D."/>
            <person name="Chillingworth T."/>
            <person name="Davies R.M."/>
            <person name="Davis P."/>
            <person name="Devlin K."/>
            <person name="Feltwell T."/>
            <person name="Hamlin N."/>
            <person name="Holroyd S."/>
            <person name="Jagels K."/>
            <person name="Leather S."/>
            <person name="Moule S."/>
            <person name="Mungall K.L."/>
            <person name="Quail M.A."/>
            <person name="Rajandream M.A."/>
            <person name="Rutherford K.M."/>
            <person name="Simmonds M."/>
            <person name="Skelton J."/>
            <person name="Whitehead S."/>
            <person name="Spratt B.G."/>
            <person name="Barrell B.G."/>
        </authorList>
    </citation>
    <scope>NUCLEOTIDE SEQUENCE [LARGE SCALE GENOMIC DNA]</scope>
    <source>
        <strain>DSM 15465 / Z2491</strain>
    </source>
</reference>
<comment type="function">
    <text evidence="1">Catalyzes the rearrangement of 1-deoxy-D-xylulose 5-phosphate (DXP) to produce the thiazole phosphate moiety of thiamine. Sulfur is provided by the thiocarboxylate moiety of the carrier protein ThiS. In vitro, sulfur can be provided by H(2)S.</text>
</comment>
<comment type="catalytic activity">
    <reaction evidence="1">
        <text>[ThiS sulfur-carrier protein]-C-terminal-Gly-aminoethanethioate + 2-iminoacetate + 1-deoxy-D-xylulose 5-phosphate = [ThiS sulfur-carrier protein]-C-terminal Gly-Gly + 2-[(2R,5Z)-2-carboxy-4-methylthiazol-5(2H)-ylidene]ethyl phosphate + 2 H2O + H(+)</text>
        <dbReference type="Rhea" id="RHEA:26297"/>
        <dbReference type="Rhea" id="RHEA-COMP:12909"/>
        <dbReference type="Rhea" id="RHEA-COMP:19908"/>
        <dbReference type="ChEBI" id="CHEBI:15377"/>
        <dbReference type="ChEBI" id="CHEBI:15378"/>
        <dbReference type="ChEBI" id="CHEBI:57792"/>
        <dbReference type="ChEBI" id="CHEBI:62899"/>
        <dbReference type="ChEBI" id="CHEBI:77846"/>
        <dbReference type="ChEBI" id="CHEBI:90778"/>
        <dbReference type="ChEBI" id="CHEBI:232372"/>
        <dbReference type="EC" id="2.8.1.10"/>
    </reaction>
</comment>
<comment type="pathway">
    <text evidence="1">Cofactor biosynthesis; thiamine diphosphate biosynthesis.</text>
</comment>
<comment type="subunit">
    <text evidence="1">Homotetramer. Forms heterodimers with either ThiH or ThiS.</text>
</comment>
<comment type="subcellular location">
    <subcellularLocation>
        <location evidence="1">Cytoplasm</location>
    </subcellularLocation>
</comment>
<comment type="similarity">
    <text evidence="1">Belongs to the ThiG family.</text>
</comment>
<dbReference type="EC" id="2.8.1.10" evidence="1"/>
<dbReference type="EMBL" id="AL157959">
    <property type="protein sequence ID" value="CAM07657.1"/>
    <property type="molecule type" value="Genomic_DNA"/>
</dbReference>
<dbReference type="PIR" id="C82032">
    <property type="entry name" value="C82032"/>
</dbReference>
<dbReference type="RefSeq" id="WP_002246519.1">
    <property type="nucleotide sequence ID" value="NC_003116.1"/>
</dbReference>
<dbReference type="SMR" id="Q9JWI4"/>
<dbReference type="EnsemblBacteria" id="CAM07657">
    <property type="protein sequence ID" value="CAM07657"/>
    <property type="gene ID" value="NMA0361"/>
</dbReference>
<dbReference type="KEGG" id="nma:NMA0361"/>
<dbReference type="HOGENOM" id="CLU_062233_1_0_4"/>
<dbReference type="UniPathway" id="UPA00060"/>
<dbReference type="Proteomes" id="UP000000626">
    <property type="component" value="Chromosome"/>
</dbReference>
<dbReference type="GO" id="GO:0005737">
    <property type="term" value="C:cytoplasm"/>
    <property type="evidence" value="ECO:0007669"/>
    <property type="project" value="UniProtKB-SubCell"/>
</dbReference>
<dbReference type="GO" id="GO:1990107">
    <property type="term" value="F:thiazole synthase activity"/>
    <property type="evidence" value="ECO:0007669"/>
    <property type="project" value="UniProtKB-EC"/>
</dbReference>
<dbReference type="GO" id="GO:0009229">
    <property type="term" value="P:thiamine diphosphate biosynthetic process"/>
    <property type="evidence" value="ECO:0007669"/>
    <property type="project" value="UniProtKB-UniRule"/>
</dbReference>
<dbReference type="CDD" id="cd04728">
    <property type="entry name" value="ThiG"/>
    <property type="match status" value="1"/>
</dbReference>
<dbReference type="Gene3D" id="3.20.20.70">
    <property type="entry name" value="Aldolase class I"/>
    <property type="match status" value="1"/>
</dbReference>
<dbReference type="HAMAP" id="MF_00443">
    <property type="entry name" value="ThiG"/>
    <property type="match status" value="1"/>
</dbReference>
<dbReference type="InterPro" id="IPR013785">
    <property type="entry name" value="Aldolase_TIM"/>
</dbReference>
<dbReference type="InterPro" id="IPR033983">
    <property type="entry name" value="Thiazole_synthase_ThiG"/>
</dbReference>
<dbReference type="InterPro" id="IPR008867">
    <property type="entry name" value="ThiG"/>
</dbReference>
<dbReference type="PANTHER" id="PTHR34266">
    <property type="entry name" value="THIAZOLE SYNTHASE"/>
    <property type="match status" value="1"/>
</dbReference>
<dbReference type="PANTHER" id="PTHR34266:SF2">
    <property type="entry name" value="THIAZOLE SYNTHASE"/>
    <property type="match status" value="1"/>
</dbReference>
<dbReference type="Pfam" id="PF05690">
    <property type="entry name" value="ThiG"/>
    <property type="match status" value="1"/>
</dbReference>
<dbReference type="SUPFAM" id="SSF110399">
    <property type="entry name" value="ThiG-like"/>
    <property type="match status" value="1"/>
</dbReference>
<name>THIG_NEIMA</name>
<accession>Q9JWI4</accession>
<accession>A1IPI8</accession>